<dbReference type="EMBL" id="CU329670">
    <property type="protein sequence ID" value="CBA11494.1"/>
    <property type="molecule type" value="Genomic_DNA"/>
</dbReference>
<dbReference type="RefSeq" id="XP_002742503.1">
    <property type="nucleotide sequence ID" value="XM_002742457.2"/>
</dbReference>
<dbReference type="SMR" id="C6Y4B2"/>
<dbReference type="PaxDb" id="4896-SPAC57A7.15c.1"/>
<dbReference type="EnsemblFungi" id="SPAC57A7.15c.1">
    <property type="protein sequence ID" value="SPAC57A7.15c.1:pep"/>
    <property type="gene ID" value="SPAC57A7.15c"/>
</dbReference>
<dbReference type="PomBase" id="SPAC57A7.15c"/>
<dbReference type="VEuPathDB" id="FungiDB:SPAC57A7.15c"/>
<dbReference type="HOGENOM" id="CLU_1866297_0_0_1"/>
<dbReference type="InParanoid" id="C6Y4B2"/>
<dbReference type="PRO" id="PR:C6Y4B2"/>
<dbReference type="Proteomes" id="UP000002485">
    <property type="component" value="Chromosome I"/>
</dbReference>
<dbReference type="GO" id="GO:0005778">
    <property type="term" value="C:peroxisomal membrane"/>
    <property type="evidence" value="ECO:0000266"/>
    <property type="project" value="PomBase"/>
</dbReference>
<dbReference type="GO" id="GO:0097027">
    <property type="term" value="F:ubiquitin-protein transferase activator activity"/>
    <property type="evidence" value="ECO:0000266"/>
    <property type="project" value="PomBase"/>
</dbReference>
<dbReference type="GO" id="GO:0016562">
    <property type="term" value="P:protein import into peroxisome matrix, receptor recycling"/>
    <property type="evidence" value="ECO:0000266"/>
    <property type="project" value="PomBase"/>
</dbReference>
<gene>
    <name type="ORF">SPAC57A7.15c</name>
</gene>
<organism>
    <name type="scientific">Schizosaccharomyces pombe (strain 972 / ATCC 24843)</name>
    <name type="common">Fission yeast</name>
    <dbReference type="NCBI Taxonomy" id="284812"/>
    <lineage>
        <taxon>Eukaryota</taxon>
        <taxon>Fungi</taxon>
        <taxon>Dikarya</taxon>
        <taxon>Ascomycota</taxon>
        <taxon>Taphrinomycotina</taxon>
        <taxon>Schizosaccharomycetes</taxon>
        <taxon>Schizosaccharomycetales</taxon>
        <taxon>Schizosaccharomycetaceae</taxon>
        <taxon>Schizosaccharomyces</taxon>
    </lineage>
</organism>
<keyword id="KW-1185">Reference proteome</keyword>
<protein>
    <recommendedName>
        <fullName>Uncharacterized protein C57A7.15c</fullName>
    </recommendedName>
</protein>
<feature type="chain" id="PRO_0000389127" description="Uncharacterized protein C57A7.15c">
    <location>
        <begin position="1"/>
        <end position="137"/>
    </location>
</feature>
<proteinExistence type="evidence at transcript level"/>
<name>YDMO_SCHPO</name>
<sequence>MFYSTTSWFQKATLAIGIGTTLYVLFKDLVRDQEAKSESKSRKKVMILVDETTSEEDIKKWSDYDLFLASRSTLLSKHTSRLESYVSHPSKALRCDDPDSILTFLKHLDINILVWNAHWSSERLKTQCENLVYILVE</sequence>
<accession>C6Y4B2</accession>
<reference key="1">
    <citation type="journal article" date="2002" name="Nature">
        <title>The genome sequence of Schizosaccharomyces pombe.</title>
        <authorList>
            <person name="Wood V."/>
            <person name="Gwilliam R."/>
            <person name="Rajandream M.A."/>
            <person name="Lyne M.H."/>
            <person name="Lyne R."/>
            <person name="Stewart A."/>
            <person name="Sgouros J.G."/>
            <person name="Peat N."/>
            <person name="Hayles J."/>
            <person name="Baker S.G."/>
            <person name="Basham D."/>
            <person name="Bowman S."/>
            <person name="Brooks K."/>
            <person name="Brown D."/>
            <person name="Brown S."/>
            <person name="Chillingworth T."/>
            <person name="Churcher C.M."/>
            <person name="Collins M."/>
            <person name="Connor R."/>
            <person name="Cronin A."/>
            <person name="Davis P."/>
            <person name="Feltwell T."/>
            <person name="Fraser A."/>
            <person name="Gentles S."/>
            <person name="Goble A."/>
            <person name="Hamlin N."/>
            <person name="Harris D.E."/>
            <person name="Hidalgo J."/>
            <person name="Hodgson G."/>
            <person name="Holroyd S."/>
            <person name="Hornsby T."/>
            <person name="Howarth S."/>
            <person name="Huckle E.J."/>
            <person name="Hunt S."/>
            <person name="Jagels K."/>
            <person name="James K.D."/>
            <person name="Jones L."/>
            <person name="Jones M."/>
            <person name="Leather S."/>
            <person name="McDonald S."/>
            <person name="McLean J."/>
            <person name="Mooney P."/>
            <person name="Moule S."/>
            <person name="Mungall K.L."/>
            <person name="Murphy L.D."/>
            <person name="Niblett D."/>
            <person name="Odell C."/>
            <person name="Oliver K."/>
            <person name="O'Neil S."/>
            <person name="Pearson D."/>
            <person name="Quail M.A."/>
            <person name="Rabbinowitsch E."/>
            <person name="Rutherford K.M."/>
            <person name="Rutter S."/>
            <person name="Saunders D."/>
            <person name="Seeger K."/>
            <person name="Sharp S."/>
            <person name="Skelton J."/>
            <person name="Simmonds M.N."/>
            <person name="Squares R."/>
            <person name="Squares S."/>
            <person name="Stevens K."/>
            <person name="Taylor K."/>
            <person name="Taylor R.G."/>
            <person name="Tivey A."/>
            <person name="Walsh S.V."/>
            <person name="Warren T."/>
            <person name="Whitehead S."/>
            <person name="Woodward J.R."/>
            <person name="Volckaert G."/>
            <person name="Aert R."/>
            <person name="Robben J."/>
            <person name="Grymonprez B."/>
            <person name="Weltjens I."/>
            <person name="Vanstreels E."/>
            <person name="Rieger M."/>
            <person name="Schaefer M."/>
            <person name="Mueller-Auer S."/>
            <person name="Gabel C."/>
            <person name="Fuchs M."/>
            <person name="Duesterhoeft A."/>
            <person name="Fritzc C."/>
            <person name="Holzer E."/>
            <person name="Moestl D."/>
            <person name="Hilbert H."/>
            <person name="Borzym K."/>
            <person name="Langer I."/>
            <person name="Beck A."/>
            <person name="Lehrach H."/>
            <person name="Reinhardt R."/>
            <person name="Pohl T.M."/>
            <person name="Eger P."/>
            <person name="Zimmermann W."/>
            <person name="Wedler H."/>
            <person name="Wambutt R."/>
            <person name="Purnelle B."/>
            <person name="Goffeau A."/>
            <person name="Cadieu E."/>
            <person name="Dreano S."/>
            <person name="Gloux S."/>
            <person name="Lelaure V."/>
            <person name="Mottier S."/>
            <person name="Galibert F."/>
            <person name="Aves S.J."/>
            <person name="Xiang Z."/>
            <person name="Hunt C."/>
            <person name="Moore K."/>
            <person name="Hurst S.M."/>
            <person name="Lucas M."/>
            <person name="Rochet M."/>
            <person name="Gaillardin C."/>
            <person name="Tallada V.A."/>
            <person name="Garzon A."/>
            <person name="Thode G."/>
            <person name="Daga R.R."/>
            <person name="Cruzado L."/>
            <person name="Jimenez J."/>
            <person name="Sanchez M."/>
            <person name="del Rey F."/>
            <person name="Benito J."/>
            <person name="Dominguez A."/>
            <person name="Revuelta J.L."/>
            <person name="Moreno S."/>
            <person name="Armstrong J."/>
            <person name="Forsburg S.L."/>
            <person name="Cerutti L."/>
            <person name="Lowe T."/>
            <person name="McCombie W.R."/>
            <person name="Paulsen I."/>
            <person name="Potashkin J."/>
            <person name="Shpakovski G.V."/>
            <person name="Ussery D."/>
            <person name="Barrell B.G."/>
            <person name="Nurse P."/>
        </authorList>
    </citation>
    <scope>NUCLEOTIDE SEQUENCE [LARGE SCALE GENOMIC DNA]</scope>
    <source>
        <strain>972 / ATCC 24843</strain>
    </source>
</reference>
<reference key="2">
    <citation type="journal article" date="2008" name="Nature">
        <title>Dynamic repertoire of a eukaryotic transcriptome surveyed at single-nucleotide resolution.</title>
        <authorList>
            <person name="Wilhelm B.T."/>
            <person name="Marguerat S."/>
            <person name="Watt S."/>
            <person name="Schubert F."/>
            <person name="Wood V."/>
            <person name="Goodhead I."/>
            <person name="Penkett C.J."/>
            <person name="Rogers J."/>
            <person name="Baehler J."/>
        </authorList>
    </citation>
    <scope>IDENTIFICATION</scope>
</reference>